<comment type="function">
    <text evidence="2">Main toxin of bee venom with strong hemolytic activity and antimicrobial activity. It has enhancing effects on bee venom phospholipase A2 activity. This amphipathic toxin binds to negatively charged membrane surface and forms pore by inserting into lipid bilayers inducing the leakage of ions and molecules and the enhancement of permeability that ultimately leads to cell lysis. It acts as a voltage-gated pore with higher selectivity for anions over cations. The ion conductance has been shown to be voltage-dependent. Self-association of melittin in membranes is promoted by high ionic strength, but not by the presence of negatively charged lipids. In vivo, intradermal injection into healthy human volunteers produce sharp pain sensation and an inflammatory response. It produces pain by activating primary nociceptor cells directly and indirectly due to its ability to activate plasma membrane phospholipase A2 and its pore-forming activity.</text>
</comment>
<comment type="subunit">
    <text evidence="2">Monomer (in solution and for integration into membranes), homotetramer (in solution and potentially as a toroidal pore in membranes), and potenially homomultimer (as a toroidal pore in membranes).</text>
</comment>
<comment type="subcellular location">
    <subcellularLocation>
        <location evidence="5">Secreted</location>
    </subcellularLocation>
    <subcellularLocation>
        <location evidence="2">Target cell membrane</location>
    </subcellularLocation>
    <text evidence="2">Alpha-helical peptides form toroidal pores in the prey.</text>
</comment>
<comment type="tissue specificity">
    <text evidence="5">Expressed by the venom gland.</text>
</comment>
<comment type="allergen">
    <text evidence="2">Causes an allergic reaction in human.</text>
</comment>
<comment type="similarity">
    <text evidence="4">Belongs to the melittin family.</text>
</comment>
<reference key="1">
    <citation type="submission" date="2004-07" db="EMBL/GenBank/DDBJ databases">
        <title>Transcription and expression of melittin gene in the venom gland of the Chinese honeybee, Apis cerana.</title>
        <authorList>
            <person name="Li J.-H."/>
            <person name="Zhang C.-X."/>
        </authorList>
    </citation>
    <scope>NUCLEOTIDE SEQUENCE [GENOMIC DNA / MRNA]</scope>
    <source>
        <tissue>Venom gland</tissue>
    </source>
</reference>
<reference key="2">
    <citation type="submission" date="2014-07" db="EMBL/GenBank/DDBJ databases">
        <title>Genomic and transcriptomic analysis on Apis cerana provide comprehensive insights into honey bee biology.</title>
        <authorList>
            <person name="Diao Q."/>
            <person name="Sun L."/>
            <person name="Zheng H."/>
            <person name="Zheng H."/>
            <person name="Xu S."/>
            <person name="Wang S."/>
            <person name="Zeng Z."/>
            <person name="Hu F."/>
            <person name="Su S."/>
            <person name="Wu J."/>
        </authorList>
    </citation>
    <scope>NUCLEOTIDE SEQUENCE [GENOMIC DNA]</scope>
</reference>
<keyword id="KW-0020">Allergen</keyword>
<keyword id="KW-0027">Amidation</keyword>
<keyword id="KW-0929">Antimicrobial</keyword>
<keyword id="KW-0204">Cytolysis</keyword>
<keyword id="KW-0291">Formylation</keyword>
<keyword id="KW-0354">Hemolysis</keyword>
<keyword id="KW-0406">Ion transport</keyword>
<keyword id="KW-0472">Membrane</keyword>
<keyword id="KW-0626">Porin</keyword>
<keyword id="KW-1185">Reference proteome</keyword>
<keyword id="KW-0964">Secreted</keyword>
<keyword id="KW-0732">Signal</keyword>
<keyword id="KW-1052">Target cell membrane</keyword>
<keyword id="KW-1053">Target membrane</keyword>
<keyword id="KW-0800">Toxin</keyword>
<keyword id="KW-0812">Transmembrane</keyword>
<keyword id="KW-0813">Transport</keyword>
<evidence type="ECO:0000250" key="1"/>
<evidence type="ECO:0000250" key="2">
    <source>
        <dbReference type="UniProtKB" id="P01501"/>
    </source>
</evidence>
<evidence type="ECO:0000303" key="3">
    <source ref="1"/>
</evidence>
<evidence type="ECO:0000305" key="4"/>
<evidence type="ECO:0000305" key="5">
    <source ref="1"/>
</evidence>
<sequence length="70" mass="7543">MKFLVNVALVFMVVYISFIYAAPEPEPAPEAEAEADAEADPEAGIGAVLKVLTTGLPALISWIKRKRQQG</sequence>
<name>MEL_APICC</name>
<proteinExistence type="inferred from homology"/>
<organism>
    <name type="scientific">Apis cerana cerana</name>
    <name type="common">Oriental honeybee</name>
    <dbReference type="NCBI Taxonomy" id="94128"/>
    <lineage>
        <taxon>Eukaryota</taxon>
        <taxon>Metazoa</taxon>
        <taxon>Ecdysozoa</taxon>
        <taxon>Arthropoda</taxon>
        <taxon>Hexapoda</taxon>
        <taxon>Insecta</taxon>
        <taxon>Pterygota</taxon>
        <taxon>Neoptera</taxon>
        <taxon>Endopterygota</taxon>
        <taxon>Hymenoptera</taxon>
        <taxon>Apocrita</taxon>
        <taxon>Aculeata</taxon>
        <taxon>Apoidea</taxon>
        <taxon>Anthophila</taxon>
        <taxon>Apidae</taxon>
        <taxon>Apis</taxon>
    </lineage>
</organism>
<accession>P68407</accession>
<accession>A0A2A3EE60</accession>
<accession>P59260</accession>
<feature type="signal peptide" evidence="1">
    <location>
        <begin position="1"/>
        <end position="21"/>
    </location>
</feature>
<feature type="propeptide" id="PRO_0000035144" description="Removed by a dipeptidylpeptidase" evidence="1">
    <location>
        <begin position="22"/>
        <end position="43"/>
    </location>
</feature>
<feature type="peptide" id="PRO_0000035145" description="Melittin" evidence="2">
    <location>
        <begin position="44"/>
        <end position="69"/>
    </location>
</feature>
<feature type="site" description="Important for the flexibility at the center of the helix, flexibility that is important for the stability of the voltage-gated pore" evidence="2">
    <location>
        <position position="57"/>
    </location>
</feature>
<feature type="modified residue" description="N-formylglycine; partial" evidence="2">
    <location>
        <position position="44"/>
    </location>
</feature>
<feature type="modified residue" description="Glutamine amide" evidence="2">
    <location>
        <position position="69"/>
    </location>
</feature>
<feature type="sequence conflict" description="In Ref. 1; AAO12201." evidence="4" ref="1">
    <original>S</original>
    <variation>G</variation>
    <location>
        <position position="61"/>
    </location>
</feature>
<dbReference type="EMBL" id="AF487907">
    <property type="protein sequence ID" value="AAO12201.2"/>
    <property type="molecule type" value="mRNA"/>
</dbReference>
<dbReference type="EMBL" id="AJ786346">
    <property type="protein sequence ID" value="CAH05131.1"/>
    <property type="molecule type" value="Genomic_DNA"/>
</dbReference>
<dbReference type="EMBL" id="KZ288269">
    <property type="protein sequence ID" value="PBC29998.1"/>
    <property type="molecule type" value="Genomic_DNA"/>
</dbReference>
<dbReference type="SMR" id="P68407"/>
<dbReference type="STRING" id="94128.P68407"/>
<dbReference type="Proteomes" id="UP000242457">
    <property type="component" value="Unassembled WGS sequence"/>
</dbReference>
<dbReference type="GO" id="GO:0005576">
    <property type="term" value="C:extracellular region"/>
    <property type="evidence" value="ECO:0007669"/>
    <property type="project" value="UniProtKB-SubCell"/>
</dbReference>
<dbReference type="GO" id="GO:0044218">
    <property type="term" value="C:other organism cell membrane"/>
    <property type="evidence" value="ECO:0007669"/>
    <property type="project" value="UniProtKB-KW"/>
</dbReference>
<dbReference type="GO" id="GO:0046930">
    <property type="term" value="C:pore complex"/>
    <property type="evidence" value="ECO:0007669"/>
    <property type="project" value="UniProtKB-KW"/>
</dbReference>
<dbReference type="GO" id="GO:0015288">
    <property type="term" value="F:porin activity"/>
    <property type="evidence" value="ECO:0007669"/>
    <property type="project" value="UniProtKB-KW"/>
</dbReference>
<dbReference type="GO" id="GO:0004860">
    <property type="term" value="F:protein kinase inhibitor activity"/>
    <property type="evidence" value="ECO:0007669"/>
    <property type="project" value="InterPro"/>
</dbReference>
<dbReference type="GO" id="GO:0090729">
    <property type="term" value="F:toxin activity"/>
    <property type="evidence" value="ECO:0007669"/>
    <property type="project" value="UniProtKB-KW"/>
</dbReference>
<dbReference type="GO" id="GO:0031640">
    <property type="term" value="P:killing of cells of another organism"/>
    <property type="evidence" value="ECO:0007669"/>
    <property type="project" value="UniProtKB-KW"/>
</dbReference>
<dbReference type="GO" id="GO:0006811">
    <property type="term" value="P:monoatomic ion transport"/>
    <property type="evidence" value="ECO:0007669"/>
    <property type="project" value="UniProtKB-KW"/>
</dbReference>
<dbReference type="InterPro" id="IPR002116">
    <property type="entry name" value="Melittin/Api_allergen"/>
</dbReference>
<dbReference type="Pfam" id="PF01372">
    <property type="entry name" value="Melittin"/>
    <property type="match status" value="1"/>
</dbReference>
<gene>
    <name type="primary">MELT</name>
</gene>
<protein>
    <recommendedName>
        <fullName evidence="3">Melittin</fullName>
        <shortName>MEL</shortName>
        <shortName>MLT</shortName>
    </recommendedName>
</protein>